<reference key="1">
    <citation type="journal article" date="2009" name="Stand. Genomic Sci.">
        <title>Complete genome sequence of Methanocorpusculum labreanum type strain Z.</title>
        <authorList>
            <person name="Anderson I.J."/>
            <person name="Sieprawska-Lupa M."/>
            <person name="Goltsman E."/>
            <person name="Lapidus A."/>
            <person name="Copeland A."/>
            <person name="Glavina Del Rio T."/>
            <person name="Tice H."/>
            <person name="Dalin E."/>
            <person name="Barry K."/>
            <person name="Pitluck S."/>
            <person name="Hauser L."/>
            <person name="Land M."/>
            <person name="Lucas S."/>
            <person name="Richardson P."/>
            <person name="Whitman W.B."/>
            <person name="Kyrpides N.C."/>
        </authorList>
    </citation>
    <scope>NUCLEOTIDE SEQUENCE [LARGE SCALE GENOMIC DNA]</scope>
    <source>
        <strain>ATCC 43576 / DSM 4855 / Z</strain>
    </source>
</reference>
<name>RL31_METLZ</name>
<keyword id="KW-1185">Reference proteome</keyword>
<keyword id="KW-0687">Ribonucleoprotein</keyword>
<keyword id="KW-0689">Ribosomal protein</keyword>
<gene>
    <name evidence="1" type="primary">rpl31e</name>
    <name type="ordered locus">Mlab_1479</name>
</gene>
<comment type="similarity">
    <text evidence="1">Belongs to the eukaryotic ribosomal protein eL31 family.</text>
</comment>
<organism>
    <name type="scientific">Methanocorpusculum labreanum (strain ATCC 43576 / DSM 4855 / Z)</name>
    <dbReference type="NCBI Taxonomy" id="410358"/>
    <lineage>
        <taxon>Archaea</taxon>
        <taxon>Methanobacteriati</taxon>
        <taxon>Methanobacteriota</taxon>
        <taxon>Stenosarchaea group</taxon>
        <taxon>Methanomicrobia</taxon>
        <taxon>Methanomicrobiales</taxon>
        <taxon>Methanocorpusculaceae</taxon>
        <taxon>Methanocorpusculum</taxon>
    </lineage>
</organism>
<dbReference type="EMBL" id="CP000559">
    <property type="protein sequence ID" value="ABN07644.1"/>
    <property type="molecule type" value="Genomic_DNA"/>
</dbReference>
<dbReference type="RefSeq" id="WP_011833847.1">
    <property type="nucleotide sequence ID" value="NC_008942.1"/>
</dbReference>
<dbReference type="SMR" id="A2STI8"/>
<dbReference type="STRING" id="410358.Mlab_1479"/>
<dbReference type="GeneID" id="4795242"/>
<dbReference type="KEGG" id="mla:Mlab_1479"/>
<dbReference type="eggNOG" id="arCOG04473">
    <property type="taxonomic scope" value="Archaea"/>
</dbReference>
<dbReference type="HOGENOM" id="CLU_112570_3_2_2"/>
<dbReference type="OrthoDB" id="10127at2157"/>
<dbReference type="Proteomes" id="UP000000365">
    <property type="component" value="Chromosome"/>
</dbReference>
<dbReference type="GO" id="GO:0022625">
    <property type="term" value="C:cytosolic large ribosomal subunit"/>
    <property type="evidence" value="ECO:0007669"/>
    <property type="project" value="TreeGrafter"/>
</dbReference>
<dbReference type="GO" id="GO:0003735">
    <property type="term" value="F:structural constituent of ribosome"/>
    <property type="evidence" value="ECO:0007669"/>
    <property type="project" value="InterPro"/>
</dbReference>
<dbReference type="GO" id="GO:0002181">
    <property type="term" value="P:cytoplasmic translation"/>
    <property type="evidence" value="ECO:0007669"/>
    <property type="project" value="TreeGrafter"/>
</dbReference>
<dbReference type="CDD" id="cd00463">
    <property type="entry name" value="Ribosomal_L31e"/>
    <property type="match status" value="1"/>
</dbReference>
<dbReference type="Gene3D" id="3.10.440.10">
    <property type="match status" value="1"/>
</dbReference>
<dbReference type="HAMAP" id="MF_00410">
    <property type="entry name" value="Ribosomal_eL31"/>
    <property type="match status" value="1"/>
</dbReference>
<dbReference type="InterPro" id="IPR000054">
    <property type="entry name" value="Ribosomal_eL31"/>
</dbReference>
<dbReference type="InterPro" id="IPR020052">
    <property type="entry name" value="Ribosomal_eL31_CS"/>
</dbReference>
<dbReference type="InterPro" id="IPR023621">
    <property type="entry name" value="Ribosomal_eL31_dom_sf"/>
</dbReference>
<dbReference type="NCBIfam" id="NF002258">
    <property type="entry name" value="PRK01192.1-1"/>
    <property type="match status" value="1"/>
</dbReference>
<dbReference type="PANTHER" id="PTHR10956">
    <property type="entry name" value="60S RIBOSOMAL PROTEIN L31"/>
    <property type="match status" value="1"/>
</dbReference>
<dbReference type="PANTHER" id="PTHR10956:SF0">
    <property type="entry name" value="60S RIBOSOMAL PROTEIN L31"/>
    <property type="match status" value="1"/>
</dbReference>
<dbReference type="Pfam" id="PF01198">
    <property type="entry name" value="Ribosomal_L31e"/>
    <property type="match status" value="1"/>
</dbReference>
<dbReference type="SMART" id="SM01380">
    <property type="entry name" value="Ribosomal_L31e"/>
    <property type="match status" value="1"/>
</dbReference>
<dbReference type="SUPFAM" id="SSF54575">
    <property type="entry name" value="Ribosomal protein L31e"/>
    <property type="match status" value="1"/>
</dbReference>
<dbReference type="PROSITE" id="PS01144">
    <property type="entry name" value="RIBOSOMAL_L31E"/>
    <property type="match status" value="1"/>
</dbReference>
<sequence>MVEVQKEQVYVIPLRDVKRVPCYKRANAAIKDIRGYLEHHMKSDDVKLDKSINELVWARGSQKPPRRIRVRAMKFEDGQVQAELAEE</sequence>
<protein>
    <recommendedName>
        <fullName evidence="1">Large ribosomal subunit protein eL31</fullName>
    </recommendedName>
    <alternativeName>
        <fullName evidence="2">50S ribosomal protein L31e</fullName>
    </alternativeName>
</protein>
<accession>A2STI8</accession>
<evidence type="ECO:0000255" key="1">
    <source>
        <dbReference type="HAMAP-Rule" id="MF_00410"/>
    </source>
</evidence>
<evidence type="ECO:0000305" key="2"/>
<feature type="chain" id="PRO_1000049914" description="Large ribosomal subunit protein eL31">
    <location>
        <begin position="1"/>
        <end position="87"/>
    </location>
</feature>
<proteinExistence type="inferred from homology"/>